<accession>P75958</accession>
<protein>
    <recommendedName>
        <fullName>Lipoprotein-releasing system transmembrane protein LolE</fullName>
    </recommendedName>
</protein>
<name>LOLE_ECOLI</name>
<gene>
    <name type="primary">lolE</name>
    <name type="synonym">ycfW</name>
    <name type="ordered locus">b1118</name>
    <name type="ordered locus">JW1104</name>
</gene>
<dbReference type="EMBL" id="U00096">
    <property type="protein sequence ID" value="AAC74202.1"/>
    <property type="molecule type" value="Genomic_DNA"/>
</dbReference>
<dbReference type="EMBL" id="AP009048">
    <property type="protein sequence ID" value="BAA35938.1"/>
    <property type="molecule type" value="Genomic_DNA"/>
</dbReference>
<dbReference type="PIR" id="C64856">
    <property type="entry name" value="C64856"/>
</dbReference>
<dbReference type="RefSeq" id="NP_415636.1">
    <property type="nucleotide sequence ID" value="NC_000913.3"/>
</dbReference>
<dbReference type="RefSeq" id="WP_001251348.1">
    <property type="nucleotide sequence ID" value="NZ_SSZK01000019.1"/>
</dbReference>
<dbReference type="PDB" id="7ARH">
    <property type="method" value="EM"/>
    <property type="resolution" value="3.30 A"/>
    <property type="chains" value="E=1-414"/>
</dbReference>
<dbReference type="PDB" id="7ARI">
    <property type="method" value="EM"/>
    <property type="resolution" value="3.40 A"/>
    <property type="chains" value="E=1-414"/>
</dbReference>
<dbReference type="PDB" id="7ARJ">
    <property type="method" value="EM"/>
    <property type="resolution" value="3.20 A"/>
    <property type="chains" value="E=1-414"/>
</dbReference>
<dbReference type="PDB" id="7ARK">
    <property type="method" value="EM"/>
    <property type="resolution" value="4.10 A"/>
    <property type="chains" value="E=1-414"/>
</dbReference>
<dbReference type="PDB" id="7ARL">
    <property type="method" value="EM"/>
    <property type="resolution" value="3.20 A"/>
    <property type="chains" value="E=1-414"/>
</dbReference>
<dbReference type="PDB" id="7ARM">
    <property type="method" value="EM"/>
    <property type="resolution" value="3.60 A"/>
    <property type="chains" value="E=1-414"/>
</dbReference>
<dbReference type="PDB" id="7MDX">
    <property type="method" value="EM"/>
    <property type="resolution" value="3.80 A"/>
    <property type="chains" value="B=6-408"/>
</dbReference>
<dbReference type="PDB" id="7MDY">
    <property type="method" value="EM"/>
    <property type="resolution" value="3.50 A"/>
    <property type="chains" value="B=1-414"/>
</dbReference>
<dbReference type="PDB" id="7V8I">
    <property type="method" value="EM"/>
    <property type="resolution" value="3.60 A"/>
    <property type="chains" value="E=1-414"/>
</dbReference>
<dbReference type="PDB" id="7V8L">
    <property type="method" value="EM"/>
    <property type="resolution" value="3.50 A"/>
    <property type="chains" value="E=1-414"/>
</dbReference>
<dbReference type="PDB" id="7V8M">
    <property type="method" value="EM"/>
    <property type="resolution" value="4.20 A"/>
    <property type="chains" value="E=1-414"/>
</dbReference>
<dbReference type="PDB" id="9GRC">
    <property type="method" value="EM"/>
    <property type="resolution" value="3.50 A"/>
    <property type="chains" value="E=1-414"/>
</dbReference>
<dbReference type="PDB" id="9GVK">
    <property type="method" value="EM"/>
    <property type="resolution" value="3.50 A"/>
    <property type="chains" value="E=1-414"/>
</dbReference>
<dbReference type="PDBsum" id="7ARH"/>
<dbReference type="PDBsum" id="7ARI"/>
<dbReference type="PDBsum" id="7ARJ"/>
<dbReference type="PDBsum" id="7ARK"/>
<dbReference type="PDBsum" id="7ARL"/>
<dbReference type="PDBsum" id="7ARM"/>
<dbReference type="PDBsum" id="7MDX"/>
<dbReference type="PDBsum" id="7MDY"/>
<dbReference type="PDBsum" id="7V8I"/>
<dbReference type="PDBsum" id="7V8L"/>
<dbReference type="PDBsum" id="7V8M"/>
<dbReference type="PDBsum" id="9GRC"/>
<dbReference type="PDBsum" id="9GVK"/>
<dbReference type="EMDB" id="EMD-11882"/>
<dbReference type="EMDB" id="EMD-11883"/>
<dbReference type="EMDB" id="EMD-11884"/>
<dbReference type="EMDB" id="EMD-11885"/>
<dbReference type="EMDB" id="EMD-11886"/>
<dbReference type="EMDB" id="EMD-11887"/>
<dbReference type="EMDB" id="EMD-23783"/>
<dbReference type="EMDB" id="EMD-31802"/>
<dbReference type="EMDB" id="EMD-31803"/>
<dbReference type="EMDB" id="EMD-31804"/>
<dbReference type="EMDB" id="EMD-51520"/>
<dbReference type="EMDB" id="EMD-51637"/>
<dbReference type="SMR" id="P75958"/>
<dbReference type="BioGRID" id="4262905">
    <property type="interactions" value="350"/>
</dbReference>
<dbReference type="BioGRID" id="850037">
    <property type="interactions" value="5"/>
</dbReference>
<dbReference type="ComplexPortal" id="CPX-4262">
    <property type="entry name" value="LolCDE lipoprotein ABC transporter complex"/>
</dbReference>
<dbReference type="FunCoup" id="P75958">
    <property type="interactions" value="494"/>
</dbReference>
<dbReference type="IntAct" id="P75958">
    <property type="interactions" value="10"/>
</dbReference>
<dbReference type="MINT" id="P75958"/>
<dbReference type="STRING" id="511145.b1118"/>
<dbReference type="TCDB" id="3.A.1.125.1">
    <property type="family name" value="the atp-binding cassette (abc) superfamily"/>
</dbReference>
<dbReference type="jPOST" id="P75958"/>
<dbReference type="PaxDb" id="511145-b1118"/>
<dbReference type="EnsemblBacteria" id="AAC74202">
    <property type="protein sequence ID" value="AAC74202"/>
    <property type="gene ID" value="b1118"/>
</dbReference>
<dbReference type="GeneID" id="75203704"/>
<dbReference type="GeneID" id="945665"/>
<dbReference type="KEGG" id="ecj:JW1104"/>
<dbReference type="KEGG" id="eco:b1118"/>
<dbReference type="KEGG" id="ecoc:C3026_06735"/>
<dbReference type="PATRIC" id="fig|511145.12.peg.1164"/>
<dbReference type="EchoBASE" id="EB3215"/>
<dbReference type="eggNOG" id="COG4591">
    <property type="taxonomic scope" value="Bacteria"/>
</dbReference>
<dbReference type="HOGENOM" id="CLU_000604_8_1_6"/>
<dbReference type="InParanoid" id="P75958"/>
<dbReference type="OMA" id="IMAVKDK"/>
<dbReference type="OrthoDB" id="9808461at2"/>
<dbReference type="PhylomeDB" id="P75958"/>
<dbReference type="BioCyc" id="EcoCyc:YCFW-MONOMER"/>
<dbReference type="BioCyc" id="MetaCyc:YCFW-MONOMER"/>
<dbReference type="PRO" id="PR:P75958"/>
<dbReference type="Proteomes" id="UP000000625">
    <property type="component" value="Chromosome"/>
</dbReference>
<dbReference type="GO" id="GO:0043190">
    <property type="term" value="C:ATP-binding cassette (ABC) transporter complex"/>
    <property type="evidence" value="ECO:0000353"/>
    <property type="project" value="ComplexPortal"/>
</dbReference>
<dbReference type="GO" id="GO:0005886">
    <property type="term" value="C:plasma membrane"/>
    <property type="evidence" value="ECO:0000314"/>
    <property type="project" value="EcoCyc"/>
</dbReference>
<dbReference type="GO" id="GO:0098797">
    <property type="term" value="C:plasma membrane protein complex"/>
    <property type="evidence" value="ECO:0000314"/>
    <property type="project" value="EcoCyc"/>
</dbReference>
<dbReference type="GO" id="GO:0140306">
    <property type="term" value="F:lipoprotein releasing activity"/>
    <property type="evidence" value="ECO:0000314"/>
    <property type="project" value="EcoCyc"/>
</dbReference>
<dbReference type="GO" id="GO:0044874">
    <property type="term" value="P:lipoprotein localization to outer membrane"/>
    <property type="evidence" value="ECO:0000314"/>
    <property type="project" value="EcoCyc"/>
</dbReference>
<dbReference type="GO" id="GO:0042953">
    <property type="term" value="P:lipoprotein transport"/>
    <property type="evidence" value="ECO:0007669"/>
    <property type="project" value="InterPro"/>
</dbReference>
<dbReference type="InterPro" id="IPR003838">
    <property type="entry name" value="ABC3_permease_C"/>
</dbReference>
<dbReference type="InterPro" id="IPR051447">
    <property type="entry name" value="Lipoprotein-release_system"/>
</dbReference>
<dbReference type="InterPro" id="IPR011925">
    <property type="entry name" value="LolCE_TM"/>
</dbReference>
<dbReference type="InterPro" id="IPR011926">
    <property type="entry name" value="LolE_gammaproteobact"/>
</dbReference>
<dbReference type="InterPro" id="IPR025857">
    <property type="entry name" value="MacB_PCD"/>
</dbReference>
<dbReference type="NCBIfam" id="TIGR02212">
    <property type="entry name" value="lolCE"/>
    <property type="match status" value="1"/>
</dbReference>
<dbReference type="NCBIfam" id="TIGR02213">
    <property type="entry name" value="lolE_release"/>
    <property type="match status" value="1"/>
</dbReference>
<dbReference type="NCBIfam" id="NF008357">
    <property type="entry name" value="PRK11146.1"/>
    <property type="match status" value="1"/>
</dbReference>
<dbReference type="PANTHER" id="PTHR30489">
    <property type="entry name" value="LIPOPROTEIN-RELEASING SYSTEM TRANSMEMBRANE PROTEIN LOLE"/>
    <property type="match status" value="1"/>
</dbReference>
<dbReference type="PANTHER" id="PTHR30489:SF0">
    <property type="entry name" value="LIPOPROTEIN-RELEASING SYSTEM TRANSMEMBRANE PROTEIN LOLE"/>
    <property type="match status" value="1"/>
</dbReference>
<dbReference type="Pfam" id="PF02687">
    <property type="entry name" value="FtsX"/>
    <property type="match status" value="1"/>
</dbReference>
<dbReference type="Pfam" id="PF12704">
    <property type="entry name" value="MacB_PCD"/>
    <property type="match status" value="1"/>
</dbReference>
<organism>
    <name type="scientific">Escherichia coli (strain K12)</name>
    <dbReference type="NCBI Taxonomy" id="83333"/>
    <lineage>
        <taxon>Bacteria</taxon>
        <taxon>Pseudomonadati</taxon>
        <taxon>Pseudomonadota</taxon>
        <taxon>Gammaproteobacteria</taxon>
        <taxon>Enterobacterales</taxon>
        <taxon>Enterobacteriaceae</taxon>
        <taxon>Escherichia</taxon>
    </lineage>
</organism>
<evidence type="ECO:0000255" key="1"/>
<evidence type="ECO:0000269" key="2">
    <source>
    </source>
</evidence>
<evidence type="ECO:0000305" key="3"/>
<evidence type="ECO:0007829" key="4">
    <source>
        <dbReference type="PDB" id="7ARI"/>
    </source>
</evidence>
<evidence type="ECO:0007829" key="5">
    <source>
        <dbReference type="PDB" id="7ARJ"/>
    </source>
</evidence>
<evidence type="ECO:0007829" key="6">
    <source>
        <dbReference type="PDB" id="7ARL"/>
    </source>
</evidence>
<evidence type="ECO:0007829" key="7">
    <source>
        <dbReference type="PDB" id="7MDY"/>
    </source>
</evidence>
<keyword id="KW-0002">3D-structure</keyword>
<keyword id="KW-0997">Cell inner membrane</keyword>
<keyword id="KW-1003">Cell membrane</keyword>
<keyword id="KW-0903">Direct protein sequencing</keyword>
<keyword id="KW-0472">Membrane</keyword>
<keyword id="KW-1185">Reference proteome</keyword>
<keyword id="KW-0812">Transmembrane</keyword>
<keyword id="KW-1133">Transmembrane helix</keyword>
<keyword id="KW-0813">Transport</keyword>
<proteinExistence type="evidence at protein level"/>
<feature type="initiator methionine" description="Removed" evidence="2">
    <location>
        <position position="1"/>
    </location>
</feature>
<feature type="chain" id="PRO_0000201818" description="Lipoprotein-releasing system transmembrane protein LolE">
    <location>
        <begin position="2"/>
        <end position="414"/>
    </location>
</feature>
<feature type="transmembrane region" description="Helical" evidence="1">
    <location>
        <begin position="25"/>
        <end position="45"/>
    </location>
</feature>
<feature type="transmembrane region" description="Helical" evidence="1">
    <location>
        <begin position="275"/>
        <end position="295"/>
    </location>
</feature>
<feature type="transmembrane region" description="Helical" evidence="1">
    <location>
        <begin position="317"/>
        <end position="337"/>
    </location>
</feature>
<feature type="transmembrane region" description="Helical" evidence="1">
    <location>
        <begin position="377"/>
        <end position="397"/>
    </location>
</feature>
<feature type="turn" evidence="5">
    <location>
        <begin position="7"/>
        <end position="12"/>
    </location>
</feature>
<feature type="helix" evidence="5">
    <location>
        <begin position="13"/>
        <end position="16"/>
    </location>
</feature>
<feature type="strand" evidence="7">
    <location>
        <begin position="17"/>
        <end position="20"/>
    </location>
</feature>
<feature type="helix" evidence="5">
    <location>
        <begin position="22"/>
        <end position="24"/>
    </location>
</feature>
<feature type="helix" evidence="5">
    <location>
        <begin position="26"/>
        <end position="58"/>
    </location>
</feature>
<feature type="turn" evidence="5">
    <location>
        <begin position="59"/>
        <end position="62"/>
    </location>
</feature>
<feature type="strand" evidence="5">
    <location>
        <begin position="65"/>
        <end position="69"/>
    </location>
</feature>
<feature type="strand" evidence="6">
    <location>
        <begin position="71"/>
        <end position="73"/>
    </location>
</feature>
<feature type="strand" evidence="6">
    <location>
        <begin position="75"/>
        <end position="77"/>
    </location>
</feature>
<feature type="helix" evidence="5">
    <location>
        <begin position="80"/>
        <end position="83"/>
    </location>
</feature>
<feature type="turn" evidence="5">
    <location>
        <begin position="84"/>
        <end position="86"/>
    </location>
</feature>
<feature type="strand" evidence="5">
    <location>
        <begin position="91"/>
        <end position="99"/>
    </location>
</feature>
<feature type="strand" evidence="6">
    <location>
        <begin position="102"/>
        <end position="104"/>
    </location>
</feature>
<feature type="strand" evidence="5">
    <location>
        <begin position="106"/>
        <end position="108"/>
    </location>
</feature>
<feature type="strand" evidence="5">
    <location>
        <begin position="115"/>
        <end position="118"/>
    </location>
</feature>
<feature type="turn" evidence="5">
    <location>
        <begin position="120"/>
        <end position="122"/>
    </location>
</feature>
<feature type="helix" evidence="5">
    <location>
        <begin position="123"/>
        <end position="125"/>
    </location>
</feature>
<feature type="helix" evidence="5">
    <location>
        <begin position="129"/>
        <end position="131"/>
    </location>
</feature>
<feature type="strand" evidence="5">
    <location>
        <begin position="132"/>
        <end position="136"/>
    </location>
</feature>
<feature type="helix" evidence="7">
    <location>
        <begin position="138"/>
        <end position="141"/>
    </location>
</feature>
<feature type="strand" evidence="5">
    <location>
        <begin position="143"/>
        <end position="145"/>
    </location>
</feature>
<feature type="strand" evidence="5">
    <location>
        <begin position="147"/>
        <end position="151"/>
    </location>
</feature>
<feature type="helix" evidence="5">
    <location>
        <begin position="152"/>
        <end position="158"/>
    </location>
</feature>
<feature type="strand" evidence="4">
    <location>
        <begin position="164"/>
        <end position="166"/>
    </location>
</feature>
<feature type="strand" evidence="5">
    <location>
        <begin position="168"/>
        <end position="170"/>
    </location>
</feature>
<feature type="strand" evidence="5">
    <location>
        <begin position="175"/>
        <end position="177"/>
    </location>
</feature>
<feature type="strand" evidence="5">
    <location>
        <begin position="187"/>
        <end position="189"/>
    </location>
</feature>
<feature type="strand" evidence="5">
    <location>
        <begin position="195"/>
        <end position="198"/>
    </location>
</feature>
<feature type="turn" evidence="5">
    <location>
        <begin position="199"/>
        <end position="202"/>
    </location>
</feature>
<feature type="strand" evidence="5">
    <location>
        <begin position="204"/>
        <end position="207"/>
    </location>
</feature>
<feature type="helix" evidence="5">
    <location>
        <begin position="208"/>
        <end position="214"/>
    </location>
</feature>
<feature type="strand" evidence="5">
    <location>
        <begin position="221"/>
        <end position="229"/>
    </location>
</feature>
<feature type="turn" evidence="5">
    <location>
        <begin position="232"/>
        <end position="239"/>
    </location>
</feature>
<feature type="helix" evidence="5">
    <location>
        <begin position="240"/>
        <end position="242"/>
    </location>
</feature>
<feature type="turn" evidence="5">
    <location>
        <begin position="243"/>
        <end position="245"/>
    </location>
</feature>
<feature type="strand" evidence="5">
    <location>
        <begin position="250"/>
        <end position="252"/>
    </location>
</feature>
<feature type="helix" evidence="5">
    <location>
        <begin position="255"/>
        <end position="258"/>
    </location>
</feature>
<feature type="helix" evidence="5">
    <location>
        <begin position="261"/>
        <end position="267"/>
    </location>
</feature>
<feature type="helix" evidence="5">
    <location>
        <begin position="268"/>
        <end position="270"/>
    </location>
</feature>
<feature type="helix" evidence="5">
    <location>
        <begin position="272"/>
        <end position="283"/>
    </location>
</feature>
<feature type="helix" evidence="5">
    <location>
        <begin position="285"/>
        <end position="297"/>
    </location>
</feature>
<feature type="helix" evidence="5">
    <location>
        <begin position="299"/>
        <end position="308"/>
    </location>
</feature>
<feature type="helix" evidence="5">
    <location>
        <begin position="312"/>
        <end position="343"/>
    </location>
</feature>
<feature type="helix" evidence="5">
    <location>
        <begin position="345"/>
        <end position="356"/>
    </location>
</feature>
<feature type="turn" evidence="7">
    <location>
        <begin position="358"/>
        <end position="360"/>
    </location>
</feature>
<feature type="turn" evidence="5">
    <location>
        <begin position="363"/>
        <end position="365"/>
    </location>
</feature>
<feature type="helix" evidence="5">
    <location>
        <begin position="378"/>
        <end position="394"/>
    </location>
</feature>
<feature type="helix" evidence="5">
    <location>
        <begin position="397"/>
        <end position="401"/>
    </location>
</feature>
<feature type="strand" evidence="5">
    <location>
        <begin position="403"/>
        <end position="405"/>
    </location>
</feature>
<feature type="turn" evidence="5">
    <location>
        <begin position="407"/>
        <end position="409"/>
    </location>
</feature>
<reference key="1">
    <citation type="journal article" date="1996" name="DNA Res.">
        <title>A 718-kb DNA sequence of the Escherichia coli K-12 genome corresponding to the 12.7-28.0 min region on the linkage map.</title>
        <authorList>
            <person name="Oshima T."/>
            <person name="Aiba H."/>
            <person name="Baba T."/>
            <person name="Fujita K."/>
            <person name="Hayashi K."/>
            <person name="Honjo A."/>
            <person name="Ikemoto K."/>
            <person name="Inada T."/>
            <person name="Itoh T."/>
            <person name="Kajihara M."/>
            <person name="Kanai K."/>
            <person name="Kashimoto K."/>
            <person name="Kimura S."/>
            <person name="Kitagawa M."/>
            <person name="Makino K."/>
            <person name="Masuda S."/>
            <person name="Miki T."/>
            <person name="Mizobuchi K."/>
            <person name="Mori H."/>
            <person name="Motomura K."/>
            <person name="Nakamura Y."/>
            <person name="Nashimoto H."/>
            <person name="Nishio Y."/>
            <person name="Saito N."/>
            <person name="Sampei G."/>
            <person name="Seki Y."/>
            <person name="Tagami H."/>
            <person name="Takemoto K."/>
            <person name="Wada C."/>
            <person name="Yamamoto Y."/>
            <person name="Yano M."/>
            <person name="Horiuchi T."/>
        </authorList>
    </citation>
    <scope>NUCLEOTIDE SEQUENCE [LARGE SCALE GENOMIC DNA]</scope>
    <source>
        <strain>K12 / W3110 / ATCC 27325 / DSM 5911</strain>
    </source>
</reference>
<reference key="2">
    <citation type="journal article" date="1997" name="Science">
        <title>The complete genome sequence of Escherichia coli K-12.</title>
        <authorList>
            <person name="Blattner F.R."/>
            <person name="Plunkett G. III"/>
            <person name="Bloch C.A."/>
            <person name="Perna N.T."/>
            <person name="Burland V."/>
            <person name="Riley M."/>
            <person name="Collado-Vides J."/>
            <person name="Glasner J.D."/>
            <person name="Rode C.K."/>
            <person name="Mayhew G.F."/>
            <person name="Gregor J."/>
            <person name="Davis N.W."/>
            <person name="Kirkpatrick H.A."/>
            <person name="Goeden M.A."/>
            <person name="Rose D.J."/>
            <person name="Mau B."/>
            <person name="Shao Y."/>
        </authorList>
    </citation>
    <scope>NUCLEOTIDE SEQUENCE [LARGE SCALE GENOMIC DNA]</scope>
    <source>
        <strain>K12 / MG1655 / ATCC 47076</strain>
    </source>
</reference>
<reference key="3">
    <citation type="journal article" date="2006" name="Mol. Syst. Biol.">
        <title>Highly accurate genome sequences of Escherichia coli K-12 strains MG1655 and W3110.</title>
        <authorList>
            <person name="Hayashi K."/>
            <person name="Morooka N."/>
            <person name="Yamamoto Y."/>
            <person name="Fujita K."/>
            <person name="Isono K."/>
            <person name="Choi S."/>
            <person name="Ohtsubo E."/>
            <person name="Baba T."/>
            <person name="Wanner B.L."/>
            <person name="Mori H."/>
            <person name="Horiuchi T."/>
        </authorList>
    </citation>
    <scope>NUCLEOTIDE SEQUENCE [LARGE SCALE GENOMIC DNA]</scope>
    <source>
        <strain>K12 / W3110 / ATCC 27325 / DSM 5911</strain>
    </source>
</reference>
<reference key="4">
    <citation type="journal article" date="2000" name="Nat. Cell Biol.">
        <title>A new ABC transporter mediating the detachment of lipid-modified proteins from membranes.</title>
        <authorList>
            <person name="Yakushi T."/>
            <person name="Masuda K."/>
            <person name="Narita S."/>
            <person name="Matsuyama S."/>
            <person name="Tokuda H."/>
        </authorList>
    </citation>
    <scope>PROTEIN SEQUENCE OF 2-11</scope>
    <scope>CHARACTERIZATION</scope>
</reference>
<comment type="function">
    <text>Part of an ATP-dependent transport system LolCDE responsible for the release of lipoproteins targeted to the outer membrane from the inner membrane. Such a release is dependent of the sorting-signal (absence of an Asp at position 2 of the mature lipoprotein) and of LolA.</text>
</comment>
<comment type="interaction">
    <interactant intactId="EBI-1125190">
        <id>P75958</id>
    </interactant>
    <interactant intactId="EBI-1124760">
        <id>P0A912</id>
        <label>pal</label>
    </interactant>
    <organismsDiffer>false</organismsDiffer>
    <experiments>2</experiments>
</comment>
<comment type="subcellular location">
    <subcellularLocation>
        <location>Cell inner membrane</location>
        <topology>Multi-pass membrane protein</topology>
    </subcellularLocation>
</comment>
<comment type="similarity">
    <text evidence="3">Belongs to the ABC-4 integral membrane protein family. LolC/E subfamily.</text>
</comment>
<sequence>MAMPLSLLIGLRFSRGRRRGGMVSLISVISTIGIALGVAVLIVGLSAMNGFERELNNRILAVVPHGEIEAVDQPWTNWQEALDHVQKVPGIAAAAPYINFTGLVESGANLRAIQVKGVNPQQEQRLSALPSFVQGDAWRNFKAGEQQIIIGKGVADALKVKQGDWVSIMIPNSNPEHKLMQPKRVRLHVAGILQLSGQLDHSFAMIPLADAQQYLDMGSSVSGIALKMTDVFNANKLVRDAGEVTNSYVYIKSWIGTYGYMYRDIQMIRAIMYLAMVLVIGVACFNIVSTLVMAVKDKSGDIAVLRTLGAKDGLIRAIFVWYGLLAGLFGSLCGVIIGVVVSLQLTPIIEWIEKLIGHQFLSSDIYFIDFLPSELHWLDVFYVLVTALLLSLLASWYPARRASNIDPARVLSGQ</sequence>